<organism>
    <name type="scientific">Homo sapiens</name>
    <name type="common">Human</name>
    <dbReference type="NCBI Taxonomy" id="9606"/>
    <lineage>
        <taxon>Eukaryota</taxon>
        <taxon>Metazoa</taxon>
        <taxon>Chordata</taxon>
        <taxon>Craniata</taxon>
        <taxon>Vertebrata</taxon>
        <taxon>Euteleostomi</taxon>
        <taxon>Mammalia</taxon>
        <taxon>Eutheria</taxon>
        <taxon>Euarchontoglires</taxon>
        <taxon>Primates</taxon>
        <taxon>Haplorrhini</taxon>
        <taxon>Catarrhini</taxon>
        <taxon>Hominidae</taxon>
        <taxon>Homo</taxon>
    </lineage>
</organism>
<dbReference type="EMBL" id="AY052405">
    <property type="protein sequence ID" value="AAL11430.1"/>
    <property type="molecule type" value="mRNA"/>
</dbReference>
<dbReference type="EMBL" id="BX248298">
    <property type="protein sequence ID" value="CAD62625.1"/>
    <property type="status" value="ALT_INIT"/>
    <property type="molecule type" value="mRNA"/>
</dbReference>
<dbReference type="EMBL" id="AK293156">
    <property type="protein sequence ID" value="BAG56701.1"/>
    <property type="molecule type" value="mRNA"/>
</dbReference>
<dbReference type="EMBL" id="CH471078">
    <property type="protein sequence ID" value="EAW65761.1"/>
    <property type="molecule type" value="Genomic_DNA"/>
</dbReference>
<dbReference type="EMBL" id="BC030142">
    <property type="protein sequence ID" value="AAH30142.1"/>
    <property type="molecule type" value="mRNA"/>
</dbReference>
<dbReference type="EMBL" id="BC093697">
    <property type="protein sequence ID" value="AAH93697.1"/>
    <property type="molecule type" value="mRNA"/>
</dbReference>
<dbReference type="EMBL" id="BC112241">
    <property type="protein sequence ID" value="AAI12242.1"/>
    <property type="molecule type" value="mRNA"/>
</dbReference>
<dbReference type="EMBL" id="BC139921">
    <property type="protein sequence ID" value="AAI39922.1"/>
    <property type="molecule type" value="mRNA"/>
</dbReference>
<dbReference type="CCDS" id="CCDS9686.1">
    <molecule id="Q96L50-1"/>
</dbReference>
<dbReference type="CCDS" id="CCDS9687.1">
    <molecule id="Q96L50-2"/>
</dbReference>
<dbReference type="RefSeq" id="NP_689542.2">
    <molecule id="Q96L50-1"/>
    <property type="nucleotide sequence ID" value="NM_152329.3"/>
</dbReference>
<dbReference type="RefSeq" id="NP_982292.1">
    <molecule id="Q96L50-2"/>
    <property type="nucleotide sequence ID" value="NM_203467.2"/>
</dbReference>
<dbReference type="PDB" id="7PLO">
    <property type="method" value="EM"/>
    <property type="resolution" value="2.80 A"/>
    <property type="chains" value="O=1-414"/>
</dbReference>
<dbReference type="PDBsum" id="7PLO"/>
<dbReference type="EMDB" id="EMD-13494"/>
<dbReference type="SMR" id="Q96L50"/>
<dbReference type="BioGRID" id="125793">
    <property type="interactions" value="45"/>
</dbReference>
<dbReference type="ComplexPortal" id="CPX-2214">
    <property type="entry name" value="LRR1-Elongin C-Elongin B E3 ubiquitin ligase complex"/>
</dbReference>
<dbReference type="FunCoup" id="Q96L50">
    <property type="interactions" value="966"/>
</dbReference>
<dbReference type="IntAct" id="Q96L50">
    <property type="interactions" value="29"/>
</dbReference>
<dbReference type="MINT" id="Q96L50"/>
<dbReference type="STRING" id="9606.ENSP00000298288"/>
<dbReference type="iPTMnet" id="Q96L50"/>
<dbReference type="PhosphoSitePlus" id="Q96L50"/>
<dbReference type="BioMuta" id="LRR1"/>
<dbReference type="DMDM" id="37079896"/>
<dbReference type="jPOST" id="Q96L50"/>
<dbReference type="MassIVE" id="Q96L50"/>
<dbReference type="PaxDb" id="9606-ENSP00000298288"/>
<dbReference type="PeptideAtlas" id="Q96L50"/>
<dbReference type="ProteomicsDB" id="77150">
    <molecule id="Q96L50-1"/>
</dbReference>
<dbReference type="ProteomicsDB" id="77151">
    <molecule id="Q96L50-2"/>
</dbReference>
<dbReference type="Pumba" id="Q96L50"/>
<dbReference type="Antibodypedia" id="23515">
    <property type="antibodies" value="106 antibodies from 18 providers"/>
</dbReference>
<dbReference type="DNASU" id="122769"/>
<dbReference type="Ensembl" id="ENST00000298288.11">
    <molecule id="Q96L50-1"/>
    <property type="protein sequence ID" value="ENSP00000298288.6"/>
    <property type="gene ID" value="ENSG00000165501.17"/>
</dbReference>
<dbReference type="Ensembl" id="ENST00000318317.8">
    <molecule id="Q96L50-2"/>
    <property type="protein sequence ID" value="ENSP00000315628.4"/>
    <property type="gene ID" value="ENSG00000165501.17"/>
</dbReference>
<dbReference type="GeneID" id="122769"/>
<dbReference type="KEGG" id="hsa:122769"/>
<dbReference type="MANE-Select" id="ENST00000298288.11">
    <property type="protein sequence ID" value="ENSP00000298288.6"/>
    <property type="RefSeq nucleotide sequence ID" value="NM_152329.4"/>
    <property type="RefSeq protein sequence ID" value="NP_689542.2"/>
</dbReference>
<dbReference type="UCSC" id="uc001wwn.3">
    <molecule id="Q96L50-1"/>
    <property type="organism name" value="human"/>
</dbReference>
<dbReference type="AGR" id="HGNC:19742"/>
<dbReference type="CTD" id="122769"/>
<dbReference type="DisGeNET" id="122769"/>
<dbReference type="GeneCards" id="LRR1"/>
<dbReference type="HGNC" id="HGNC:19742">
    <property type="gene designation" value="LRR1"/>
</dbReference>
<dbReference type="HPA" id="ENSG00000165501">
    <property type="expression patterns" value="Tissue enhanced (testis)"/>
</dbReference>
<dbReference type="MIM" id="609193">
    <property type="type" value="gene"/>
</dbReference>
<dbReference type="neXtProt" id="NX_Q96L50"/>
<dbReference type="OpenTargets" id="ENSG00000165501"/>
<dbReference type="PharmGKB" id="PA134915321"/>
<dbReference type="VEuPathDB" id="HostDB:ENSG00000165501"/>
<dbReference type="eggNOG" id="KOG0619">
    <property type="taxonomic scope" value="Eukaryota"/>
</dbReference>
<dbReference type="GeneTree" id="ENSGT00940000158830"/>
<dbReference type="HOGENOM" id="CLU_053349_1_0_1"/>
<dbReference type="InParanoid" id="Q96L50"/>
<dbReference type="OMA" id="GELNDWC"/>
<dbReference type="OrthoDB" id="17912at2759"/>
<dbReference type="PAN-GO" id="Q96L50">
    <property type="GO annotations" value="0 GO annotations based on evolutionary models"/>
</dbReference>
<dbReference type="PhylomeDB" id="Q96L50"/>
<dbReference type="TreeFam" id="TF319257"/>
<dbReference type="PathwayCommons" id="Q96L50"/>
<dbReference type="Reactome" id="R-HSA-8951664">
    <property type="pathway name" value="Neddylation"/>
</dbReference>
<dbReference type="Reactome" id="R-HSA-983168">
    <property type="pathway name" value="Antigen processing: Ubiquitination &amp; Proteasome degradation"/>
</dbReference>
<dbReference type="SignaLink" id="Q96L50"/>
<dbReference type="UniPathway" id="UPA00143"/>
<dbReference type="BioGRID-ORCS" id="122769">
    <property type="hits" value="671 hits in 1152 CRISPR screens"/>
</dbReference>
<dbReference type="ChiTaRS" id="LRR1">
    <property type="organism name" value="human"/>
</dbReference>
<dbReference type="GenomeRNAi" id="122769"/>
<dbReference type="Pharos" id="Q96L50">
    <property type="development level" value="Tbio"/>
</dbReference>
<dbReference type="PRO" id="PR:Q96L50"/>
<dbReference type="Proteomes" id="UP000005640">
    <property type="component" value="Chromosome 14"/>
</dbReference>
<dbReference type="RNAct" id="Q96L50">
    <property type="molecule type" value="protein"/>
</dbReference>
<dbReference type="Bgee" id="ENSG00000165501">
    <property type="expression patterns" value="Expressed in ileal mucosa and 145 other cell types or tissues"/>
</dbReference>
<dbReference type="ExpressionAtlas" id="Q96L50">
    <property type="expression patterns" value="baseline and differential"/>
</dbReference>
<dbReference type="GO" id="GO:0005829">
    <property type="term" value="C:cytosol"/>
    <property type="evidence" value="ECO:0000304"/>
    <property type="project" value="Reactome"/>
</dbReference>
<dbReference type="GO" id="GO:0005634">
    <property type="term" value="C:nucleus"/>
    <property type="evidence" value="ECO:0007669"/>
    <property type="project" value="UniProtKB-SubCell"/>
</dbReference>
<dbReference type="GO" id="GO:0035556">
    <property type="term" value="P:intracellular signal transduction"/>
    <property type="evidence" value="ECO:0000318"/>
    <property type="project" value="GO_Central"/>
</dbReference>
<dbReference type="GO" id="GO:0016567">
    <property type="term" value="P:protein ubiquitination"/>
    <property type="evidence" value="ECO:0007669"/>
    <property type="project" value="UniProtKB-UniPathway"/>
</dbReference>
<dbReference type="FunFam" id="3.80.10.10:FF:001222">
    <property type="entry name" value="Leucine rich repeat protein 1"/>
    <property type="match status" value="1"/>
</dbReference>
<dbReference type="FunFam" id="3.80.10.10:FF:001792">
    <property type="entry name" value="Leucine-rich repeat protein 1"/>
    <property type="match status" value="1"/>
</dbReference>
<dbReference type="Gene3D" id="3.80.10.10">
    <property type="entry name" value="Ribonuclease Inhibitor"/>
    <property type="match status" value="2"/>
</dbReference>
<dbReference type="InterPro" id="IPR001611">
    <property type="entry name" value="Leu-rich_rpt"/>
</dbReference>
<dbReference type="InterPro" id="IPR025875">
    <property type="entry name" value="Leu-rich_rpt_4"/>
</dbReference>
<dbReference type="InterPro" id="IPR003591">
    <property type="entry name" value="Leu-rich_rpt_typical-subtyp"/>
</dbReference>
<dbReference type="InterPro" id="IPR032675">
    <property type="entry name" value="LRR_dom_sf"/>
</dbReference>
<dbReference type="InterPro" id="IPR050216">
    <property type="entry name" value="LRR_domain-containing"/>
</dbReference>
<dbReference type="PANTHER" id="PTHR48051">
    <property type="match status" value="1"/>
</dbReference>
<dbReference type="PANTHER" id="PTHR48051:SF52">
    <property type="entry name" value="LEUCINE-RICH REPEAT PROTEIN 1"/>
    <property type="match status" value="1"/>
</dbReference>
<dbReference type="Pfam" id="PF00560">
    <property type="entry name" value="LRR_1"/>
    <property type="match status" value="1"/>
</dbReference>
<dbReference type="Pfam" id="PF12799">
    <property type="entry name" value="LRR_4"/>
    <property type="match status" value="1"/>
</dbReference>
<dbReference type="Pfam" id="PF25344">
    <property type="entry name" value="PH_LRR1"/>
    <property type="match status" value="1"/>
</dbReference>
<dbReference type="SMART" id="SM00369">
    <property type="entry name" value="LRR_TYP"/>
    <property type="match status" value="4"/>
</dbReference>
<dbReference type="SUPFAM" id="SSF52058">
    <property type="entry name" value="L domain-like"/>
    <property type="match status" value="1"/>
</dbReference>
<dbReference type="PROSITE" id="PS51450">
    <property type="entry name" value="LRR"/>
    <property type="match status" value="6"/>
</dbReference>
<accession>Q96L50</accession>
<accession>A5D6X3</accession>
<accession>B4DDE0</accession>
<accession>Q52M24</accession>
<accession>Q86SZ1</accession>
<accession>Q8N6H9</accession>
<name>LLR1_HUMAN</name>
<keyword id="KW-0002">3D-structure</keyword>
<keyword id="KW-0025">Alternative splicing</keyword>
<keyword id="KW-0433">Leucine-rich repeat</keyword>
<keyword id="KW-0539">Nucleus</keyword>
<keyword id="KW-1267">Proteomics identification</keyword>
<keyword id="KW-1185">Reference proteome</keyword>
<keyword id="KW-0677">Repeat</keyword>
<keyword id="KW-0833">Ubl conjugation pathway</keyword>
<reference key="1">
    <citation type="journal article" date="2001" name="Mol. Cells">
        <title>A novel leucine-rich repeat protein (LRR-1): potential involvement in 4-1BB-mediated signal transduction.</title>
        <authorList>
            <person name="Jang I.-K."/>
            <person name="Lee Z.-H."/>
            <person name="Kim H.-H."/>
            <person name="Hill J.M."/>
            <person name="Kim J.-D."/>
            <person name="Kwon B.S."/>
        </authorList>
    </citation>
    <scope>NUCLEOTIDE SEQUENCE [MRNA] (ISOFORMS 1 AND 2)</scope>
    <scope>CHARACTERIZATION</scope>
    <source>
        <tissue>T-cell lymphoma</tissue>
    </source>
</reference>
<reference key="2">
    <citation type="submission" date="2003-02" db="EMBL/GenBank/DDBJ databases">
        <title>Full-length cDNA libraries and normalization.</title>
        <authorList>
            <person name="Li W.B."/>
            <person name="Gruber C."/>
            <person name="Jessee J."/>
            <person name="Polayes D."/>
        </authorList>
    </citation>
    <scope>NUCLEOTIDE SEQUENCE [LARGE SCALE MRNA] (ISOFORM 1)</scope>
    <source>
        <tissue>Cervix carcinoma</tissue>
    </source>
</reference>
<reference key="3">
    <citation type="journal article" date="2004" name="Nat. Genet.">
        <title>Complete sequencing and characterization of 21,243 full-length human cDNAs.</title>
        <authorList>
            <person name="Ota T."/>
            <person name="Suzuki Y."/>
            <person name="Nishikawa T."/>
            <person name="Otsuki T."/>
            <person name="Sugiyama T."/>
            <person name="Irie R."/>
            <person name="Wakamatsu A."/>
            <person name="Hayashi K."/>
            <person name="Sato H."/>
            <person name="Nagai K."/>
            <person name="Kimura K."/>
            <person name="Makita H."/>
            <person name="Sekine M."/>
            <person name="Obayashi M."/>
            <person name="Nishi T."/>
            <person name="Shibahara T."/>
            <person name="Tanaka T."/>
            <person name="Ishii S."/>
            <person name="Yamamoto J."/>
            <person name="Saito K."/>
            <person name="Kawai Y."/>
            <person name="Isono Y."/>
            <person name="Nakamura Y."/>
            <person name="Nagahari K."/>
            <person name="Murakami K."/>
            <person name="Yasuda T."/>
            <person name="Iwayanagi T."/>
            <person name="Wagatsuma M."/>
            <person name="Shiratori A."/>
            <person name="Sudo H."/>
            <person name="Hosoiri T."/>
            <person name="Kaku Y."/>
            <person name="Kodaira H."/>
            <person name="Kondo H."/>
            <person name="Sugawara M."/>
            <person name="Takahashi M."/>
            <person name="Kanda K."/>
            <person name="Yokoi T."/>
            <person name="Furuya T."/>
            <person name="Kikkawa E."/>
            <person name="Omura Y."/>
            <person name="Abe K."/>
            <person name="Kamihara K."/>
            <person name="Katsuta N."/>
            <person name="Sato K."/>
            <person name="Tanikawa M."/>
            <person name="Yamazaki M."/>
            <person name="Ninomiya K."/>
            <person name="Ishibashi T."/>
            <person name="Yamashita H."/>
            <person name="Murakawa K."/>
            <person name="Fujimori K."/>
            <person name="Tanai H."/>
            <person name="Kimata M."/>
            <person name="Watanabe M."/>
            <person name="Hiraoka S."/>
            <person name="Chiba Y."/>
            <person name="Ishida S."/>
            <person name="Ono Y."/>
            <person name="Takiguchi S."/>
            <person name="Watanabe S."/>
            <person name="Yosida M."/>
            <person name="Hotuta T."/>
            <person name="Kusano J."/>
            <person name="Kanehori K."/>
            <person name="Takahashi-Fujii A."/>
            <person name="Hara H."/>
            <person name="Tanase T.-O."/>
            <person name="Nomura Y."/>
            <person name="Togiya S."/>
            <person name="Komai F."/>
            <person name="Hara R."/>
            <person name="Takeuchi K."/>
            <person name="Arita M."/>
            <person name="Imose N."/>
            <person name="Musashino K."/>
            <person name="Yuuki H."/>
            <person name="Oshima A."/>
            <person name="Sasaki N."/>
            <person name="Aotsuka S."/>
            <person name="Yoshikawa Y."/>
            <person name="Matsunawa H."/>
            <person name="Ichihara T."/>
            <person name="Shiohata N."/>
            <person name="Sano S."/>
            <person name="Moriya S."/>
            <person name="Momiyama H."/>
            <person name="Satoh N."/>
            <person name="Takami S."/>
            <person name="Terashima Y."/>
            <person name="Suzuki O."/>
            <person name="Nakagawa S."/>
            <person name="Senoh A."/>
            <person name="Mizoguchi H."/>
            <person name="Goto Y."/>
            <person name="Shimizu F."/>
            <person name="Wakebe H."/>
            <person name="Hishigaki H."/>
            <person name="Watanabe T."/>
            <person name="Sugiyama A."/>
            <person name="Takemoto M."/>
            <person name="Kawakami B."/>
            <person name="Yamazaki M."/>
            <person name="Watanabe K."/>
            <person name="Kumagai A."/>
            <person name="Itakura S."/>
            <person name="Fukuzumi Y."/>
            <person name="Fujimori Y."/>
            <person name="Komiyama M."/>
            <person name="Tashiro H."/>
            <person name="Tanigami A."/>
            <person name="Fujiwara T."/>
            <person name="Ono T."/>
            <person name="Yamada K."/>
            <person name="Fujii Y."/>
            <person name="Ozaki K."/>
            <person name="Hirao M."/>
            <person name="Ohmori Y."/>
            <person name="Kawabata A."/>
            <person name="Hikiji T."/>
            <person name="Kobatake N."/>
            <person name="Inagaki H."/>
            <person name="Ikema Y."/>
            <person name="Okamoto S."/>
            <person name="Okitani R."/>
            <person name="Kawakami T."/>
            <person name="Noguchi S."/>
            <person name="Itoh T."/>
            <person name="Shigeta K."/>
            <person name="Senba T."/>
            <person name="Matsumura K."/>
            <person name="Nakajima Y."/>
            <person name="Mizuno T."/>
            <person name="Morinaga M."/>
            <person name="Sasaki M."/>
            <person name="Togashi T."/>
            <person name="Oyama M."/>
            <person name="Hata H."/>
            <person name="Watanabe M."/>
            <person name="Komatsu T."/>
            <person name="Mizushima-Sugano J."/>
            <person name="Satoh T."/>
            <person name="Shirai Y."/>
            <person name="Takahashi Y."/>
            <person name="Nakagawa K."/>
            <person name="Okumura K."/>
            <person name="Nagase T."/>
            <person name="Nomura N."/>
            <person name="Kikuchi H."/>
            <person name="Masuho Y."/>
            <person name="Yamashita R."/>
            <person name="Nakai K."/>
            <person name="Yada T."/>
            <person name="Nakamura Y."/>
            <person name="Ohara O."/>
            <person name="Isogai T."/>
            <person name="Sugano S."/>
        </authorList>
    </citation>
    <scope>NUCLEOTIDE SEQUENCE [LARGE SCALE MRNA] (ISOFORM 1)</scope>
    <source>
        <tissue>Neuroblastoma</tissue>
    </source>
</reference>
<reference key="4">
    <citation type="submission" date="2005-09" db="EMBL/GenBank/DDBJ databases">
        <authorList>
            <person name="Mural R.J."/>
            <person name="Istrail S."/>
            <person name="Sutton G.G."/>
            <person name="Florea L."/>
            <person name="Halpern A.L."/>
            <person name="Mobarry C.M."/>
            <person name="Lippert R."/>
            <person name="Walenz B."/>
            <person name="Shatkay H."/>
            <person name="Dew I."/>
            <person name="Miller J.R."/>
            <person name="Flanigan M.J."/>
            <person name="Edwards N.J."/>
            <person name="Bolanos R."/>
            <person name="Fasulo D."/>
            <person name="Halldorsson B.V."/>
            <person name="Hannenhalli S."/>
            <person name="Turner R."/>
            <person name="Yooseph S."/>
            <person name="Lu F."/>
            <person name="Nusskern D.R."/>
            <person name="Shue B.C."/>
            <person name="Zheng X.H."/>
            <person name="Zhong F."/>
            <person name="Delcher A.L."/>
            <person name="Huson D.H."/>
            <person name="Kravitz S.A."/>
            <person name="Mouchard L."/>
            <person name="Reinert K."/>
            <person name="Remington K.A."/>
            <person name="Clark A.G."/>
            <person name="Waterman M.S."/>
            <person name="Eichler E.E."/>
            <person name="Adams M.D."/>
            <person name="Hunkapiller M.W."/>
            <person name="Myers E.W."/>
            <person name="Venter J.C."/>
        </authorList>
    </citation>
    <scope>NUCLEOTIDE SEQUENCE [LARGE SCALE GENOMIC DNA]</scope>
</reference>
<reference key="5">
    <citation type="journal article" date="2004" name="Genome Res.">
        <title>The status, quality, and expansion of the NIH full-length cDNA project: the Mammalian Gene Collection (MGC).</title>
        <authorList>
            <consortium name="The MGC Project Team"/>
        </authorList>
    </citation>
    <scope>NUCLEOTIDE SEQUENCE [LARGE SCALE MRNA] (ISOFORMS 1 AND 2)</scope>
    <source>
        <tissue>B-cell</tissue>
        <tissue>Heart</tissue>
        <tissue>Lung</tissue>
    </source>
</reference>
<reference key="6">
    <citation type="journal article" date="2004" name="Genes Dev.">
        <title>VHL-box and SOCS-box domains determine binding specificity for Cul2-Rbx1 and Cul5-Rbx2 modules of ubiquitin ligases.</title>
        <authorList>
            <person name="Kamura T."/>
            <person name="Maenaka K."/>
            <person name="Kotoshiba S."/>
            <person name="Matsumoto M."/>
            <person name="Kohda D."/>
            <person name="Conaway R.C."/>
            <person name="Conaway J.W."/>
            <person name="Nakayama K.I."/>
        </authorList>
    </citation>
    <scope>FUNCTION IN AN E3 UBIQUITIN LIGASE COMPLEX</scope>
    <scope>IDENTIFICATION BY MASS SPECTROMETRY</scope>
    <scope>INTERACTION WITH CUL2; RBX1; ELOB AND ELOC</scope>
    <scope>MUTAGENESIS OF 341-HIS--PRO-344</scope>
</reference>
<reference evidence="9" key="7">
    <citation type="journal article" date="2021" name="Nature">
        <title>A conserved mechanism for regulating replisome disassembly in eukaryotes.</title>
        <authorList>
            <person name="Jenkyn-Bedford M."/>
            <person name="Jones M.L."/>
            <person name="Baris Y."/>
            <person name="Labib K.P.M."/>
            <person name="Cannone G."/>
            <person name="Yeeles J.T.P."/>
            <person name="Deegan T.D."/>
        </authorList>
    </citation>
    <scope>STRUCTURE BY ELECTRON MICROSCOPY (2.80 ANGSTROMS) IN COMPLEX WITH REPLISOME AND DNA POLYMERASE EPSILON</scope>
    <scope>SUBUNIT</scope>
    <scope>SUBCELLULAR LOCATION</scope>
</reference>
<gene>
    <name evidence="8" type="primary">LRR1</name>
    <name type="synonym">PPIL5</name>
</gene>
<protein>
    <recommendedName>
        <fullName>Leucine-rich repeat protein 1</fullName>
    </recommendedName>
    <alternativeName>
        <fullName>4-1BB-mediated-signaling molecule</fullName>
    </alternativeName>
    <alternativeName>
        <fullName>4-1BBlrr</fullName>
    </alternativeName>
    <alternativeName>
        <fullName>LRR-repeat protein 1</fullName>
        <shortName>LRR-1</shortName>
    </alternativeName>
    <alternativeName>
        <fullName>Peptidylprolyl isomerase-like 5</fullName>
    </alternativeName>
</protein>
<comment type="function">
    <text evidence="1 2 3">Substrate recognition subunit of an ECS (Elongin BC-CUL2/5-SOCS-box protein) E3 ubiquitin-protein ligase complex which mediates the ubiquitination and subsequent proteasomal degradation of target proteins (PubMed:15601820). ECS(LRR1) ubiquitinates MCM7 and promotes CMG replisome disassembly by VCP and chromatin extraction during S-phase (By similarity). May negatively regulate the 4-1BB-mediated signaling cascades which result in the activation of NK-kappaB and JNK1 (PubMed:11804328).</text>
</comment>
<comment type="pathway">
    <text evidence="3">Protein modification; protein ubiquitination.</text>
</comment>
<comment type="subunit">
    <text evidence="3 4">Component of the probable ECS(LRR1) E3 ubiquitin-protein ligase complex which contains CUL2, RBX1, Elongin BC complex and LRR1. Interacts with CUL2, RBX1, ELOB and ELOC.</text>
</comment>
<comment type="interaction">
    <interactant intactId="EBI-2510106">
        <id>Q96L50</id>
    </interactant>
    <interactant intactId="EBI-742948">
        <id>Q5JR59</id>
        <label>MTUS2</label>
    </interactant>
    <organismsDiffer>false</organismsDiffer>
    <experiments>3</experiments>
</comment>
<comment type="interaction">
    <interactant intactId="EBI-2510106">
        <id>Q96L50</id>
    </interactant>
    <interactant intactId="EBI-764534">
        <id>Q16877</id>
        <label>PFKFB4</label>
    </interactant>
    <organismsDiffer>false</organismsDiffer>
    <experiments>3</experiments>
</comment>
<comment type="interaction">
    <interactant intactId="EBI-2510106">
        <id>Q96L50</id>
    </interactant>
    <interactant intactId="EBI-302355">
        <id>Q9UL42</id>
        <label>PNMA2</label>
    </interactant>
    <organismsDiffer>false</organismsDiffer>
    <experiments>3</experiments>
</comment>
<comment type="interaction">
    <interactant intactId="EBI-2510106">
        <id>Q96L50</id>
    </interactant>
    <interactant intactId="EBI-358993">
        <id>Q15645</id>
        <label>TRIP13</label>
    </interactant>
    <organismsDiffer>false</organismsDiffer>
    <experiments>3</experiments>
</comment>
<comment type="subcellular location">
    <subcellularLocation>
        <location evidence="4">Nucleus</location>
    </subcellularLocation>
</comment>
<comment type="alternative products">
    <event type="alternative splicing"/>
    <isoform>
        <id>Q96L50-1</id>
        <name>1</name>
        <name>LRR-1a</name>
        <sequence type="displayed"/>
    </isoform>
    <isoform>
        <id>Q96L50-2</id>
        <name>2</name>
        <name>LRR-1b</name>
        <sequence type="described" ref="VSP_008363 VSP_008364"/>
    </isoform>
</comment>
<comment type="tissue specificity">
    <text>Ubiquitous. Maximal expression was seen in the heart and skeletal muscle and minimal expression seen in the kidney.</text>
</comment>
<comment type="sequence caution" evidence="7">
    <conflict type="erroneous initiation">
        <sequence resource="EMBL-CDS" id="CAD62625"/>
    </conflict>
    <text>Extended N-terminus.</text>
</comment>
<evidence type="ECO:0000250" key="1">
    <source>
        <dbReference type="UniProtKB" id="D3YY91"/>
    </source>
</evidence>
<evidence type="ECO:0000269" key="2">
    <source>
    </source>
</evidence>
<evidence type="ECO:0000269" key="3">
    <source>
    </source>
</evidence>
<evidence type="ECO:0000269" key="4">
    <source>
    </source>
</evidence>
<evidence type="ECO:0000303" key="5">
    <source>
    </source>
</evidence>
<evidence type="ECO:0000303" key="6">
    <source>
    </source>
</evidence>
<evidence type="ECO:0000305" key="7"/>
<evidence type="ECO:0000312" key="8">
    <source>
        <dbReference type="HGNC" id="HGNC:19742"/>
    </source>
</evidence>
<evidence type="ECO:0007744" key="9">
    <source>
        <dbReference type="PDB" id="7PLO"/>
    </source>
</evidence>
<proteinExistence type="evidence at protein level"/>
<feature type="chain" id="PRO_0000084447" description="Leucine-rich repeat protein 1">
    <location>
        <begin position="1"/>
        <end position="414"/>
    </location>
</feature>
<feature type="repeat" description="LRR 1">
    <location>
        <begin position="155"/>
        <end position="176"/>
    </location>
</feature>
<feature type="repeat" description="LRR 2">
    <location>
        <begin position="178"/>
        <end position="199"/>
    </location>
</feature>
<feature type="repeat" description="LRR 3">
    <location>
        <begin position="201"/>
        <end position="222"/>
    </location>
</feature>
<feature type="repeat" description="LRR 4">
    <location>
        <begin position="227"/>
        <end position="248"/>
    </location>
</feature>
<feature type="repeat" description="LRR 5">
    <location>
        <begin position="250"/>
        <end position="271"/>
    </location>
</feature>
<feature type="repeat" description="LRR 6">
    <location>
        <begin position="273"/>
        <end position="294"/>
    </location>
</feature>
<feature type="repeat" description="LRR 7">
    <location>
        <begin position="295"/>
        <end position="316"/>
    </location>
</feature>
<feature type="splice variant" id="VSP_008363" description="In isoform 2." evidence="5 6">
    <original>AISSSLKGFLSAMRLAHRGCNVDTPVSTLTPVKTSEFENFKTKMVITSKKDY</original>
    <variation>DSIWLSYHSIPSLPRFGYRKNLCLWKILSELFHSRNYYHESAFCCPHCGLSR</variation>
    <location>
        <begin position="95"/>
        <end position="146"/>
    </location>
</feature>
<feature type="splice variant" id="VSP_008364" description="In isoform 2." evidence="5 6">
    <location>
        <begin position="147"/>
        <end position="414"/>
    </location>
</feature>
<feature type="sequence variant" id="VAR_051095" description="In dbSNP:rs17121605.">
    <original>I</original>
    <variation>N</variation>
    <location>
        <position position="96"/>
    </location>
</feature>
<feature type="sequence variant" id="VAR_051096" description="In dbSNP:rs7148147.">
    <original>R</original>
    <variation>W</variation>
    <location>
        <position position="229"/>
    </location>
</feature>
<feature type="mutagenesis site" description="Abolishes interaction with CUL2 and RBX1." evidence="3">
    <original>HIIP</original>
    <variation>AAA</variation>
    <location>
        <begin position="341"/>
        <end position="344"/>
    </location>
</feature>
<feature type="sequence conflict" description="In Ref. 3; BAG56701." evidence="7" ref="3">
    <original>V</original>
    <variation>A</variation>
    <location>
        <position position="9"/>
    </location>
</feature>
<feature type="sequence conflict" description="In Ref. 1; AAL11430." evidence="7" ref="1">
    <original>G</original>
    <variation>V</variation>
    <location>
        <position position="25"/>
    </location>
</feature>
<feature type="sequence conflict" description="In Ref. 1; AAL11430." evidence="7" ref="1">
    <original>A</original>
    <variation>S</variation>
    <location>
        <position position="28"/>
    </location>
</feature>
<sequence>MKLHCEVEVISRHLPALGLRNRGKGVRAVLSLCQQTSRSQPPVRAFLLISTLKDKRGTRYELRENIEQFFTKFVDEGKATVRLKEPPVDICLSKAISSSLKGFLSAMRLAHRGCNVDTPVSTLTPVKTSEFENFKTKMVITSKKDYPLSKNFPYSLEHLQTSYCGLVRVDMRMLCLKSLRKLDLSHNHIKKLPATIGDLIHLQELNLNDNHLESFSVALCHSTLQKSLRSLDLSKNKIKALPVQFCQLQELKNLKLDDNELIQFPCKIGQLINLRFLSAARNKLPFLPSEFRNLSLEYLDLFGNTFEQPKVLPVIKLQAPLTLLESSARTILHNRIPYGSHIIPFHLCQDLDTAKICVCGRFCLNSFIQGTTTMNLHSVAHTVVLVDNLGGTEAPIISYFCSLGCYVNSSDMLK</sequence>